<comment type="catalytic activity">
    <reaction evidence="1">
        <text>(S)-4-amino-5-oxopentanoate = 5-aminolevulinate</text>
        <dbReference type="Rhea" id="RHEA:14265"/>
        <dbReference type="ChEBI" id="CHEBI:57501"/>
        <dbReference type="ChEBI" id="CHEBI:356416"/>
        <dbReference type="EC" id="5.4.3.8"/>
    </reaction>
</comment>
<comment type="cofactor">
    <cofactor evidence="1">
        <name>pyridoxal 5'-phosphate</name>
        <dbReference type="ChEBI" id="CHEBI:597326"/>
    </cofactor>
</comment>
<comment type="pathway">
    <text evidence="1">Porphyrin-containing compound metabolism; protoporphyrin-IX biosynthesis; 5-aminolevulinate from L-glutamyl-tRNA(Glu): step 2/2.</text>
</comment>
<comment type="subunit">
    <text evidence="1">Homodimer.</text>
</comment>
<comment type="subcellular location">
    <subcellularLocation>
        <location evidence="1">Cytoplasm</location>
    </subcellularLocation>
</comment>
<comment type="similarity">
    <text evidence="1">Belongs to the class-III pyridoxal-phosphate-dependent aminotransferase family. HemL subfamily.</text>
</comment>
<accession>B4SI23</accession>
<dbReference type="EC" id="5.4.3.8" evidence="1"/>
<dbReference type="EMBL" id="CP001111">
    <property type="protein sequence ID" value="ACF52987.1"/>
    <property type="molecule type" value="Genomic_DNA"/>
</dbReference>
<dbReference type="RefSeq" id="WP_012512012.1">
    <property type="nucleotide sequence ID" value="NC_011071.1"/>
</dbReference>
<dbReference type="SMR" id="B4SI23"/>
<dbReference type="STRING" id="391008.Smal_3288"/>
<dbReference type="KEGG" id="smt:Smal_3288"/>
<dbReference type="eggNOG" id="COG0001">
    <property type="taxonomic scope" value="Bacteria"/>
</dbReference>
<dbReference type="HOGENOM" id="CLU_016922_1_5_6"/>
<dbReference type="OrthoDB" id="9801052at2"/>
<dbReference type="UniPathway" id="UPA00251">
    <property type="reaction ID" value="UER00317"/>
</dbReference>
<dbReference type="Proteomes" id="UP000001867">
    <property type="component" value="Chromosome"/>
</dbReference>
<dbReference type="GO" id="GO:0005737">
    <property type="term" value="C:cytoplasm"/>
    <property type="evidence" value="ECO:0007669"/>
    <property type="project" value="UniProtKB-SubCell"/>
</dbReference>
<dbReference type="GO" id="GO:0042286">
    <property type="term" value="F:glutamate-1-semialdehyde 2,1-aminomutase activity"/>
    <property type="evidence" value="ECO:0007669"/>
    <property type="project" value="UniProtKB-UniRule"/>
</dbReference>
<dbReference type="GO" id="GO:0030170">
    <property type="term" value="F:pyridoxal phosphate binding"/>
    <property type="evidence" value="ECO:0007669"/>
    <property type="project" value="InterPro"/>
</dbReference>
<dbReference type="GO" id="GO:0008483">
    <property type="term" value="F:transaminase activity"/>
    <property type="evidence" value="ECO:0007669"/>
    <property type="project" value="InterPro"/>
</dbReference>
<dbReference type="GO" id="GO:0006782">
    <property type="term" value="P:protoporphyrinogen IX biosynthetic process"/>
    <property type="evidence" value="ECO:0007669"/>
    <property type="project" value="UniProtKB-UniRule"/>
</dbReference>
<dbReference type="CDD" id="cd00610">
    <property type="entry name" value="OAT_like"/>
    <property type="match status" value="1"/>
</dbReference>
<dbReference type="FunFam" id="3.40.640.10:FF:000021">
    <property type="entry name" value="Glutamate-1-semialdehyde 2,1-aminomutase"/>
    <property type="match status" value="1"/>
</dbReference>
<dbReference type="Gene3D" id="3.90.1150.10">
    <property type="entry name" value="Aspartate Aminotransferase, domain 1"/>
    <property type="match status" value="1"/>
</dbReference>
<dbReference type="Gene3D" id="3.40.640.10">
    <property type="entry name" value="Type I PLP-dependent aspartate aminotransferase-like (Major domain)"/>
    <property type="match status" value="1"/>
</dbReference>
<dbReference type="HAMAP" id="MF_00375">
    <property type="entry name" value="HemL_aminotrans_3"/>
    <property type="match status" value="1"/>
</dbReference>
<dbReference type="InterPro" id="IPR004639">
    <property type="entry name" value="4pyrrol_synth_GluAld_NH2Trfase"/>
</dbReference>
<dbReference type="InterPro" id="IPR005814">
    <property type="entry name" value="Aminotrans_3"/>
</dbReference>
<dbReference type="InterPro" id="IPR049704">
    <property type="entry name" value="Aminotrans_3_PPA_site"/>
</dbReference>
<dbReference type="InterPro" id="IPR015424">
    <property type="entry name" value="PyrdxlP-dep_Trfase"/>
</dbReference>
<dbReference type="InterPro" id="IPR015421">
    <property type="entry name" value="PyrdxlP-dep_Trfase_major"/>
</dbReference>
<dbReference type="InterPro" id="IPR015422">
    <property type="entry name" value="PyrdxlP-dep_Trfase_small"/>
</dbReference>
<dbReference type="NCBIfam" id="TIGR00713">
    <property type="entry name" value="hemL"/>
    <property type="match status" value="1"/>
</dbReference>
<dbReference type="NCBIfam" id="NF000818">
    <property type="entry name" value="PRK00062.1"/>
    <property type="match status" value="1"/>
</dbReference>
<dbReference type="PANTHER" id="PTHR43713">
    <property type="entry name" value="GLUTAMATE-1-SEMIALDEHYDE 2,1-AMINOMUTASE"/>
    <property type="match status" value="1"/>
</dbReference>
<dbReference type="PANTHER" id="PTHR43713:SF3">
    <property type="entry name" value="GLUTAMATE-1-SEMIALDEHYDE 2,1-AMINOMUTASE 1, CHLOROPLASTIC-RELATED"/>
    <property type="match status" value="1"/>
</dbReference>
<dbReference type="Pfam" id="PF00202">
    <property type="entry name" value="Aminotran_3"/>
    <property type="match status" value="1"/>
</dbReference>
<dbReference type="SUPFAM" id="SSF53383">
    <property type="entry name" value="PLP-dependent transferases"/>
    <property type="match status" value="1"/>
</dbReference>
<dbReference type="PROSITE" id="PS00600">
    <property type="entry name" value="AA_TRANSFER_CLASS_3"/>
    <property type="match status" value="1"/>
</dbReference>
<name>GSA_STRM5</name>
<feature type="chain" id="PRO_1000121925" description="Glutamate-1-semialdehyde 2,1-aminomutase">
    <location>
        <begin position="1"/>
        <end position="429"/>
    </location>
</feature>
<feature type="modified residue" description="N6-(pyridoxal phosphate)lysine" evidence="1">
    <location>
        <position position="267"/>
    </location>
</feature>
<organism>
    <name type="scientific">Stenotrophomonas maltophilia (strain R551-3)</name>
    <dbReference type="NCBI Taxonomy" id="391008"/>
    <lineage>
        <taxon>Bacteria</taxon>
        <taxon>Pseudomonadati</taxon>
        <taxon>Pseudomonadota</taxon>
        <taxon>Gammaproteobacteria</taxon>
        <taxon>Lysobacterales</taxon>
        <taxon>Lysobacteraceae</taxon>
        <taxon>Stenotrophomonas</taxon>
        <taxon>Stenotrophomonas maltophilia group</taxon>
    </lineage>
</organism>
<gene>
    <name evidence="1" type="primary">hemL</name>
    <name type="ordered locus">Smal_3288</name>
</gene>
<evidence type="ECO:0000255" key="1">
    <source>
        <dbReference type="HAMAP-Rule" id="MF_00375"/>
    </source>
</evidence>
<reference key="1">
    <citation type="submission" date="2008-06" db="EMBL/GenBank/DDBJ databases">
        <title>Complete sequence of Stenotrophomonas maltophilia R551-3.</title>
        <authorList>
            <consortium name="US DOE Joint Genome Institute"/>
            <person name="Lucas S."/>
            <person name="Copeland A."/>
            <person name="Lapidus A."/>
            <person name="Glavina del Rio T."/>
            <person name="Dalin E."/>
            <person name="Tice H."/>
            <person name="Pitluck S."/>
            <person name="Chain P."/>
            <person name="Malfatti S."/>
            <person name="Shin M."/>
            <person name="Vergez L."/>
            <person name="Lang D."/>
            <person name="Schmutz J."/>
            <person name="Larimer F."/>
            <person name="Land M."/>
            <person name="Hauser L."/>
            <person name="Kyrpides N."/>
            <person name="Mikhailova N."/>
            <person name="Taghavi S."/>
            <person name="Monchy S."/>
            <person name="Newman L."/>
            <person name="Vangronsveld J."/>
            <person name="van der Lelie D."/>
            <person name="Richardson P."/>
        </authorList>
    </citation>
    <scope>NUCLEOTIDE SEQUENCE [LARGE SCALE GENOMIC DNA]</scope>
    <source>
        <strain>R551-3</strain>
    </source>
</reference>
<sequence>MNHDQSHALFSRAQQLLPGGVNSPVRAFKSVGGEPFFVERADGAYLYDVDGNRYIDYVGSWGPMIVGHNHTAVRQAVKKAIDNGLSFGAPCAAEVTMAETITRLVPSCEMVRMVNSGTEATLSAIRLARGATGRNRIVKFEGCYHGHGDSFLVKAGSGMLTLGVPTSPGVPAGLSELTLTLPYNDFEAATALFEQQGDDIAGLIIEPVVGNANCIPPRDGYLQHLRELCTKHGTLLIFDEVMTGFRVALGGAQAHYGITPDLTTFGKIIGGGMPVGAYGGRRELMQQIAPAGPIYQAGTLSGNPVAMAAGLAMLELIQQPGFHADLAERTARLCAGLEAAAADAGVVVTTTCVGAMFGLFFTSEKVETYAQATACDIPAFNRFFHAMLDQGVFLAPSAYEAGFLSSAHDDAVIEATLAAARVAFKAAKG</sequence>
<protein>
    <recommendedName>
        <fullName evidence="1">Glutamate-1-semialdehyde 2,1-aminomutase</fullName>
        <shortName evidence="1">GSA</shortName>
        <ecNumber evidence="1">5.4.3.8</ecNumber>
    </recommendedName>
    <alternativeName>
        <fullName evidence="1">Glutamate-1-semialdehyde aminotransferase</fullName>
        <shortName evidence="1">GSA-AT</shortName>
    </alternativeName>
</protein>
<proteinExistence type="inferred from homology"/>
<keyword id="KW-0963">Cytoplasm</keyword>
<keyword id="KW-0413">Isomerase</keyword>
<keyword id="KW-0627">Porphyrin biosynthesis</keyword>
<keyword id="KW-0663">Pyridoxal phosphate</keyword>